<dbReference type="EC" id="3.1.3.2"/>
<dbReference type="EMBL" id="AY842022">
    <property type="protein sequence ID" value="AAW29947.1"/>
    <property type="molecule type" value="mRNA"/>
</dbReference>
<dbReference type="EMBL" id="AC058785">
    <property type="protein sequence ID" value="AAG51511.1"/>
    <property type="molecule type" value="Genomic_DNA"/>
</dbReference>
<dbReference type="EMBL" id="AC069159">
    <property type="protein sequence ID" value="AAG50924.1"/>
    <property type="molecule type" value="Genomic_DNA"/>
</dbReference>
<dbReference type="EMBL" id="CP002684">
    <property type="protein sequence ID" value="AEE33383.1"/>
    <property type="molecule type" value="Genomic_DNA"/>
</dbReference>
<dbReference type="EMBL" id="DQ446366">
    <property type="protein sequence ID" value="ABE65716.1"/>
    <property type="molecule type" value="mRNA"/>
</dbReference>
<dbReference type="EMBL" id="BT026359">
    <property type="protein sequence ID" value="ABH04466.1"/>
    <property type="molecule type" value="mRNA"/>
</dbReference>
<dbReference type="PIR" id="F96605">
    <property type="entry name" value="F96605"/>
</dbReference>
<dbReference type="RefSeq" id="NP_176033.1">
    <property type="nucleotide sequence ID" value="NM_104516.1"/>
</dbReference>
<dbReference type="SMR" id="Q9C510"/>
<dbReference type="FunCoup" id="Q9C510">
    <property type="interactions" value="54"/>
</dbReference>
<dbReference type="STRING" id="3702.Q9C510"/>
<dbReference type="GlyCosmos" id="Q9C510">
    <property type="glycosylation" value="4 sites, No reported glycans"/>
</dbReference>
<dbReference type="GlyGen" id="Q9C510">
    <property type="glycosylation" value="4 sites"/>
</dbReference>
<dbReference type="PaxDb" id="3702-AT1G56360.1"/>
<dbReference type="ProteomicsDB" id="249033"/>
<dbReference type="EnsemblPlants" id="AT1G56360.1">
    <property type="protein sequence ID" value="AT1G56360.1"/>
    <property type="gene ID" value="AT1G56360"/>
</dbReference>
<dbReference type="GeneID" id="842090"/>
<dbReference type="Gramene" id="AT1G56360.1">
    <property type="protein sequence ID" value="AT1G56360.1"/>
    <property type="gene ID" value="AT1G56360"/>
</dbReference>
<dbReference type="KEGG" id="ath:AT1G56360"/>
<dbReference type="Araport" id="AT1G56360"/>
<dbReference type="TAIR" id="AT1G56360">
    <property type="gene designation" value="PAP6"/>
</dbReference>
<dbReference type="eggNOG" id="KOG1378">
    <property type="taxonomic scope" value="Eukaryota"/>
</dbReference>
<dbReference type="HOGENOM" id="CLU_013387_0_1_1"/>
<dbReference type="InParanoid" id="Q9C510"/>
<dbReference type="OMA" id="RTHAQYT"/>
<dbReference type="OrthoDB" id="45007at2759"/>
<dbReference type="PhylomeDB" id="Q9C510"/>
<dbReference type="BioCyc" id="ARA:AT1G56360-MONOMER"/>
<dbReference type="PRO" id="PR:Q9C510"/>
<dbReference type="Proteomes" id="UP000006548">
    <property type="component" value="Chromosome 1"/>
</dbReference>
<dbReference type="ExpressionAtlas" id="Q9C510">
    <property type="expression patterns" value="baseline and differential"/>
</dbReference>
<dbReference type="GO" id="GO:0005576">
    <property type="term" value="C:extracellular region"/>
    <property type="evidence" value="ECO:0007669"/>
    <property type="project" value="UniProtKB-SubCell"/>
</dbReference>
<dbReference type="GO" id="GO:0003993">
    <property type="term" value="F:acid phosphatase activity"/>
    <property type="evidence" value="ECO:0000250"/>
    <property type="project" value="TAIR"/>
</dbReference>
<dbReference type="GO" id="GO:0046872">
    <property type="term" value="F:metal ion binding"/>
    <property type="evidence" value="ECO:0007669"/>
    <property type="project" value="UniProtKB-KW"/>
</dbReference>
<dbReference type="CDD" id="cd00839">
    <property type="entry name" value="MPP_PAPs"/>
    <property type="match status" value="1"/>
</dbReference>
<dbReference type="FunFam" id="2.60.40.380:FF:000001">
    <property type="entry name" value="Fe(3+)-Zn(2+) purple acid phosphatase"/>
    <property type="match status" value="1"/>
</dbReference>
<dbReference type="FunFam" id="3.60.21.10:FF:000034">
    <property type="entry name" value="Fe(3+)-Zn(2+) purple acid phosphatase"/>
    <property type="match status" value="1"/>
</dbReference>
<dbReference type="Gene3D" id="3.60.21.10">
    <property type="match status" value="1"/>
</dbReference>
<dbReference type="Gene3D" id="2.60.40.380">
    <property type="entry name" value="Purple acid phosphatase-like, N-terminal"/>
    <property type="match status" value="1"/>
</dbReference>
<dbReference type="InterPro" id="IPR004843">
    <property type="entry name" value="Calcineurin-like_PHP_ApaH"/>
</dbReference>
<dbReference type="InterPro" id="IPR029052">
    <property type="entry name" value="Metallo-depent_PP-like"/>
</dbReference>
<dbReference type="InterPro" id="IPR041792">
    <property type="entry name" value="MPP_PAP"/>
</dbReference>
<dbReference type="InterPro" id="IPR039331">
    <property type="entry name" value="PPA-like"/>
</dbReference>
<dbReference type="InterPro" id="IPR008963">
    <property type="entry name" value="Purple_acid_Pase-like_N"/>
</dbReference>
<dbReference type="InterPro" id="IPR015914">
    <property type="entry name" value="Purple_acid_Pase_N"/>
</dbReference>
<dbReference type="InterPro" id="IPR025733">
    <property type="entry name" value="Purple_acid_PPase_C_dom"/>
</dbReference>
<dbReference type="PANTHER" id="PTHR22953">
    <property type="entry name" value="ACID PHOSPHATASE RELATED"/>
    <property type="match status" value="1"/>
</dbReference>
<dbReference type="PANTHER" id="PTHR22953:SF114">
    <property type="entry name" value="PURPLE ACID PHOSPHATASE 25-RELATED"/>
    <property type="match status" value="1"/>
</dbReference>
<dbReference type="Pfam" id="PF00149">
    <property type="entry name" value="Metallophos"/>
    <property type="match status" value="1"/>
</dbReference>
<dbReference type="Pfam" id="PF14008">
    <property type="entry name" value="Metallophos_C"/>
    <property type="match status" value="1"/>
</dbReference>
<dbReference type="Pfam" id="PF16656">
    <property type="entry name" value="Pur_ac_phosph_N"/>
    <property type="match status" value="1"/>
</dbReference>
<dbReference type="SUPFAM" id="SSF56300">
    <property type="entry name" value="Metallo-dependent phosphatases"/>
    <property type="match status" value="1"/>
</dbReference>
<dbReference type="SUPFAM" id="SSF49363">
    <property type="entry name" value="Purple acid phosphatase, N-terminal domain"/>
    <property type="match status" value="1"/>
</dbReference>
<organism>
    <name type="scientific">Arabidopsis thaliana</name>
    <name type="common">Mouse-ear cress</name>
    <dbReference type="NCBI Taxonomy" id="3702"/>
    <lineage>
        <taxon>Eukaryota</taxon>
        <taxon>Viridiplantae</taxon>
        <taxon>Streptophyta</taxon>
        <taxon>Embryophyta</taxon>
        <taxon>Tracheophyta</taxon>
        <taxon>Spermatophyta</taxon>
        <taxon>Magnoliopsida</taxon>
        <taxon>eudicotyledons</taxon>
        <taxon>Gunneridae</taxon>
        <taxon>Pentapetalae</taxon>
        <taxon>rosids</taxon>
        <taxon>malvids</taxon>
        <taxon>Brassicales</taxon>
        <taxon>Brassicaceae</taxon>
        <taxon>Camelineae</taxon>
        <taxon>Arabidopsis</taxon>
    </lineage>
</organism>
<reference key="1">
    <citation type="journal article" date="2005" name="Plant Mol. Biol.">
        <title>Expression patterns of purple acid phosphatase genes in Arabidopsis organs and functional analysis of AtPAP23 predominantly transcribed in flower.</title>
        <authorList>
            <person name="Zhu H."/>
            <person name="Qian W."/>
            <person name="Lu X."/>
            <person name="Li D."/>
            <person name="Liu X."/>
            <person name="Liu K."/>
            <person name="Wang D."/>
        </authorList>
    </citation>
    <scope>NUCLEOTIDE SEQUENCE [MRNA]</scope>
    <scope>TISSUE SPECIFICITY</scope>
    <source>
        <strain>cv. Columbia</strain>
    </source>
</reference>
<reference key="2">
    <citation type="journal article" date="2000" name="Nature">
        <title>Sequence and analysis of chromosome 1 of the plant Arabidopsis thaliana.</title>
        <authorList>
            <person name="Theologis A."/>
            <person name="Ecker J.R."/>
            <person name="Palm C.J."/>
            <person name="Federspiel N.A."/>
            <person name="Kaul S."/>
            <person name="White O."/>
            <person name="Alonso J."/>
            <person name="Altafi H."/>
            <person name="Araujo R."/>
            <person name="Bowman C.L."/>
            <person name="Brooks S.Y."/>
            <person name="Buehler E."/>
            <person name="Chan A."/>
            <person name="Chao Q."/>
            <person name="Chen H."/>
            <person name="Cheuk R.F."/>
            <person name="Chin C.W."/>
            <person name="Chung M.K."/>
            <person name="Conn L."/>
            <person name="Conway A.B."/>
            <person name="Conway A.R."/>
            <person name="Creasy T.H."/>
            <person name="Dewar K."/>
            <person name="Dunn P."/>
            <person name="Etgu P."/>
            <person name="Feldblyum T.V."/>
            <person name="Feng J.-D."/>
            <person name="Fong B."/>
            <person name="Fujii C.Y."/>
            <person name="Gill J.E."/>
            <person name="Goldsmith A.D."/>
            <person name="Haas B."/>
            <person name="Hansen N.F."/>
            <person name="Hughes B."/>
            <person name="Huizar L."/>
            <person name="Hunter J.L."/>
            <person name="Jenkins J."/>
            <person name="Johnson-Hopson C."/>
            <person name="Khan S."/>
            <person name="Khaykin E."/>
            <person name="Kim C.J."/>
            <person name="Koo H.L."/>
            <person name="Kremenetskaia I."/>
            <person name="Kurtz D.B."/>
            <person name="Kwan A."/>
            <person name="Lam B."/>
            <person name="Langin-Hooper S."/>
            <person name="Lee A."/>
            <person name="Lee J.M."/>
            <person name="Lenz C.A."/>
            <person name="Li J.H."/>
            <person name="Li Y.-P."/>
            <person name="Lin X."/>
            <person name="Liu S.X."/>
            <person name="Liu Z.A."/>
            <person name="Luros J.S."/>
            <person name="Maiti R."/>
            <person name="Marziali A."/>
            <person name="Militscher J."/>
            <person name="Miranda M."/>
            <person name="Nguyen M."/>
            <person name="Nierman W.C."/>
            <person name="Osborne B.I."/>
            <person name="Pai G."/>
            <person name="Peterson J."/>
            <person name="Pham P.K."/>
            <person name="Rizzo M."/>
            <person name="Rooney T."/>
            <person name="Rowley D."/>
            <person name="Sakano H."/>
            <person name="Salzberg S.L."/>
            <person name="Schwartz J.R."/>
            <person name="Shinn P."/>
            <person name="Southwick A.M."/>
            <person name="Sun H."/>
            <person name="Tallon L.J."/>
            <person name="Tambunga G."/>
            <person name="Toriumi M.J."/>
            <person name="Town C.D."/>
            <person name="Utterback T."/>
            <person name="Van Aken S."/>
            <person name="Vaysberg M."/>
            <person name="Vysotskaia V.S."/>
            <person name="Walker M."/>
            <person name="Wu D."/>
            <person name="Yu G."/>
            <person name="Fraser C.M."/>
            <person name="Venter J.C."/>
            <person name="Davis R.W."/>
        </authorList>
    </citation>
    <scope>NUCLEOTIDE SEQUENCE [LARGE SCALE GENOMIC DNA]</scope>
    <source>
        <strain>cv. Columbia</strain>
    </source>
</reference>
<reference key="3">
    <citation type="journal article" date="2017" name="Plant J.">
        <title>Araport11: a complete reannotation of the Arabidopsis thaliana reference genome.</title>
        <authorList>
            <person name="Cheng C.Y."/>
            <person name="Krishnakumar V."/>
            <person name="Chan A.P."/>
            <person name="Thibaud-Nissen F."/>
            <person name="Schobel S."/>
            <person name="Town C.D."/>
        </authorList>
    </citation>
    <scope>GENOME REANNOTATION</scope>
    <source>
        <strain>cv. Columbia</strain>
    </source>
</reference>
<reference key="4">
    <citation type="submission" date="2006-03" db="EMBL/GenBank/DDBJ databases">
        <authorList>
            <person name="Underwood B.A."/>
            <person name="Xiao Y.-L."/>
            <person name="Moskal W.A. Jr."/>
            <person name="Monaghan E.L."/>
            <person name="Wang W."/>
            <person name="Redman J.C."/>
            <person name="Wu H.C."/>
            <person name="Utterback T."/>
            <person name="Town C.D."/>
        </authorList>
    </citation>
    <scope>NUCLEOTIDE SEQUENCE [LARGE SCALE MRNA]</scope>
    <source>
        <strain>cv. Columbia</strain>
    </source>
</reference>
<reference key="5">
    <citation type="submission" date="2006-08" db="EMBL/GenBank/DDBJ databases">
        <title>Arabidopsis ORF Clones.</title>
        <authorList>
            <person name="Quinitio C."/>
            <person name="Chen H."/>
            <person name="Kim C.J."/>
            <person name="Shinn P."/>
            <person name="Ecker J.R."/>
        </authorList>
    </citation>
    <scope>NUCLEOTIDE SEQUENCE [LARGE SCALE MRNA]</scope>
    <source>
        <strain>cv. Columbia</strain>
    </source>
</reference>
<reference key="6">
    <citation type="journal article" date="2002" name="J. Biol. Chem.">
        <title>Purple acid phosphatases of Arabidopsis thaliana. Comparative analysis and differential regulation by phosphate deprivation.</title>
        <authorList>
            <person name="Li D."/>
            <person name="Zhu H."/>
            <person name="Liu K."/>
            <person name="Liu X."/>
            <person name="Leggewie G."/>
            <person name="Udvardi M."/>
            <person name="Wang D."/>
        </authorList>
    </citation>
    <scope>GENE FAMILY</scope>
    <scope>NOMENCLATURE</scope>
</reference>
<proteinExistence type="evidence at transcript level"/>
<comment type="catalytic activity">
    <reaction>
        <text>a phosphate monoester + H2O = an alcohol + phosphate</text>
        <dbReference type="Rhea" id="RHEA:15017"/>
        <dbReference type="ChEBI" id="CHEBI:15377"/>
        <dbReference type="ChEBI" id="CHEBI:30879"/>
        <dbReference type="ChEBI" id="CHEBI:43474"/>
        <dbReference type="ChEBI" id="CHEBI:67140"/>
        <dbReference type="EC" id="3.1.3.2"/>
    </reaction>
</comment>
<comment type="cofactor">
    <cofactor evidence="1">
        <name>Fe cation</name>
        <dbReference type="ChEBI" id="CHEBI:24875"/>
    </cofactor>
    <text evidence="1">Binds 1 Fe cation per subunit.</text>
</comment>
<comment type="cofactor">
    <cofactor evidence="1">
        <name>Zn(2+)</name>
        <dbReference type="ChEBI" id="CHEBI:29105"/>
    </cofactor>
    <text evidence="1">Binds 1 zinc ion per subunit.</text>
</comment>
<comment type="subunit">
    <text evidence="1">Homodimer.</text>
</comment>
<comment type="subcellular location">
    <subcellularLocation>
        <location evidence="1">Secreted</location>
    </subcellularLocation>
</comment>
<comment type="tissue specificity">
    <text evidence="3">Specifically expressed in flowers.</text>
</comment>
<comment type="similarity">
    <text evidence="4">Belongs to the metallophosphoesterase superfamily. Purple acid phosphatase family.</text>
</comment>
<keyword id="KW-0325">Glycoprotein</keyword>
<keyword id="KW-0378">Hydrolase</keyword>
<keyword id="KW-0408">Iron</keyword>
<keyword id="KW-0479">Metal-binding</keyword>
<keyword id="KW-1185">Reference proteome</keyword>
<keyword id="KW-0964">Secreted</keyword>
<keyword id="KW-0732">Signal</keyword>
<keyword id="KW-0862">Zinc</keyword>
<feature type="signal peptide" evidence="2">
    <location>
        <begin position="1"/>
        <end position="20"/>
    </location>
</feature>
<feature type="chain" id="PRO_0000372811" description="Purple acid phosphatase 6">
    <location>
        <begin position="21"/>
        <end position="466"/>
    </location>
</feature>
<feature type="active site" description="Proton donor" evidence="1">
    <location>
        <position position="324"/>
    </location>
</feature>
<feature type="binding site" evidence="1">
    <location>
        <position position="164"/>
    </location>
    <ligand>
        <name>Fe cation</name>
        <dbReference type="ChEBI" id="CHEBI:24875"/>
    </ligand>
</feature>
<feature type="binding site" evidence="1">
    <location>
        <position position="192"/>
    </location>
    <ligand>
        <name>Fe cation</name>
        <dbReference type="ChEBI" id="CHEBI:24875"/>
    </ligand>
</feature>
<feature type="binding site" evidence="1">
    <location>
        <position position="192"/>
    </location>
    <ligand>
        <name>Zn(2+)</name>
        <dbReference type="ChEBI" id="CHEBI:29105"/>
    </ligand>
</feature>
<feature type="binding site" evidence="1">
    <location>
        <position position="195"/>
    </location>
    <ligand>
        <name>Fe cation</name>
        <dbReference type="ChEBI" id="CHEBI:24875"/>
    </ligand>
</feature>
<feature type="binding site" evidence="1">
    <location>
        <position position="229"/>
    </location>
    <ligand>
        <name>substrate</name>
    </ligand>
</feature>
<feature type="binding site" evidence="1">
    <location>
        <position position="229"/>
    </location>
    <ligand>
        <name>Zn(2+)</name>
        <dbReference type="ChEBI" id="CHEBI:29105"/>
    </ligand>
</feature>
<feature type="binding site" evidence="1">
    <location>
        <position position="314"/>
    </location>
    <ligand>
        <name>Zn(2+)</name>
        <dbReference type="ChEBI" id="CHEBI:29105"/>
    </ligand>
</feature>
<feature type="binding site" evidence="1">
    <location>
        <begin position="351"/>
        <end position="353"/>
    </location>
    <ligand>
        <name>substrate</name>
    </ligand>
</feature>
<feature type="binding site" evidence="1">
    <location>
        <position position="351"/>
    </location>
    <ligand>
        <name>Zn(2+)</name>
        <dbReference type="ChEBI" id="CHEBI:29105"/>
    </ligand>
</feature>
<feature type="binding site" evidence="1">
    <location>
        <position position="353"/>
    </location>
    <ligand>
        <name>Fe cation</name>
        <dbReference type="ChEBI" id="CHEBI:24875"/>
    </ligand>
</feature>
<feature type="glycosylation site" description="N-linked (GlcNAc...) asparagine" evidence="2">
    <location>
        <position position="88"/>
    </location>
</feature>
<feature type="glycosylation site" description="N-linked (GlcNAc...) asparagine" evidence="2">
    <location>
        <position position="172"/>
    </location>
</feature>
<feature type="glycosylation site" description="N-linked (GlcNAc...) asparagine" evidence="2">
    <location>
        <position position="367"/>
    </location>
</feature>
<feature type="glycosylation site" description="N-linked (GlcNAc...) asparagine" evidence="2">
    <location>
        <position position="424"/>
    </location>
</feature>
<feature type="sequence conflict" description="In Ref. 1; AAW29947." evidence="4" ref="1">
    <original>TL</original>
    <variation>AS</variation>
    <location>
        <begin position="174"/>
        <end position="175"/>
    </location>
</feature>
<feature type="sequence conflict" description="In Ref. 1; AAW29947." evidence="4" ref="1">
    <original>R</original>
    <variation>G</variation>
    <location>
        <position position="357"/>
    </location>
</feature>
<feature type="sequence conflict" description="In Ref. 1; AAW29947." evidence="4" ref="1">
    <original>A</original>
    <variation>T</variation>
    <location>
        <position position="442"/>
    </location>
</feature>
<evidence type="ECO:0000250" key="1"/>
<evidence type="ECO:0000255" key="2"/>
<evidence type="ECO:0000269" key="3">
    <source>
    </source>
</evidence>
<evidence type="ECO:0000305" key="4"/>
<sequence>MKNLVIFAFLFLSITTVINGGITSKFVRQALPSIEMSLDTFPSPGGYNTPEQVHLTQGDHDGRGMIVSWVTPLNLAGSNVVTYWIATNGSDVKPAKKRAHASTKSYRFYDYSSGFLHHATIKGLEYDTKYIYEVGTDKSVRQFSFTTPPKIGPDVPYTFGIIGDLGQTYASNETLYHYMSNPKGQAVLFAGDLSYADDHPNHDQRKWDTWGRFMEPCAAYQPFIFAAGNHEIDFVPNIGEPHAFKPYTHRYPNAYKASQSTSPLWYSVRRASAHIIVLSSYSAYGKYTPQYIWLEQELKNVNREETPWLIVIVHSPWYNSNNYHYMEGESMRVMFESWLVNSKVDLVLSGHVHAYERSERISNIKYNITNGLSSPVKDPNAPIYITIGDGGNIEGIANSFVDPQPSYSAYREASFGHAVLEIMNRTHAQYTWHRNQDNEPVAADSIMLHNRHFFPVEEIVSSNIRA</sequence>
<gene>
    <name type="primary">PAP6</name>
    <name type="ordered locus">At1g56360</name>
    <name type="ORF">F13N6.16</name>
    <name type="ORF">F14G9.2</name>
</gene>
<name>PPA6_ARATH</name>
<protein>
    <recommendedName>
        <fullName>Purple acid phosphatase 6</fullName>
        <ecNumber>3.1.3.2</ecNumber>
    </recommendedName>
</protein>
<accession>Q9C510</accession>
<accession>Q5MAV2</accession>